<dbReference type="EC" id="2.1.1.-" evidence="1"/>
<dbReference type="EC" id="2.1.1.35" evidence="1"/>
<dbReference type="EMBL" id="CP000767">
    <property type="protein sequence ID" value="EAU00468.1"/>
    <property type="molecule type" value="Genomic_DNA"/>
</dbReference>
<dbReference type="RefSeq" id="WP_011992197.1">
    <property type="nucleotide sequence ID" value="NC_009715.2"/>
</dbReference>
<dbReference type="SMR" id="A7GY40"/>
<dbReference type="STRING" id="360105.CCV52592_1420"/>
<dbReference type="KEGG" id="ccv:CCV52592_1420"/>
<dbReference type="HOGENOM" id="CLU_043022_0_0_7"/>
<dbReference type="OrthoDB" id="9804590at2"/>
<dbReference type="Proteomes" id="UP000006380">
    <property type="component" value="Chromosome"/>
</dbReference>
<dbReference type="GO" id="GO:0005829">
    <property type="term" value="C:cytosol"/>
    <property type="evidence" value="ECO:0007669"/>
    <property type="project" value="TreeGrafter"/>
</dbReference>
<dbReference type="GO" id="GO:0019843">
    <property type="term" value="F:rRNA binding"/>
    <property type="evidence" value="ECO:0007669"/>
    <property type="project" value="TreeGrafter"/>
</dbReference>
<dbReference type="GO" id="GO:0030697">
    <property type="term" value="F:tRNA (uracil(54)-C5)-methyltransferase activity, S-adenosyl methionine-dependent"/>
    <property type="evidence" value="ECO:0007669"/>
    <property type="project" value="UniProtKB-EC"/>
</dbReference>
<dbReference type="GO" id="GO:0000049">
    <property type="term" value="F:tRNA binding"/>
    <property type="evidence" value="ECO:0007669"/>
    <property type="project" value="TreeGrafter"/>
</dbReference>
<dbReference type="GO" id="GO:0032259">
    <property type="term" value="P:methylation"/>
    <property type="evidence" value="ECO:0007669"/>
    <property type="project" value="UniProtKB-KW"/>
</dbReference>
<dbReference type="GO" id="GO:0008033">
    <property type="term" value="P:tRNA processing"/>
    <property type="evidence" value="ECO:0007669"/>
    <property type="project" value="UniProtKB-KW"/>
</dbReference>
<dbReference type="CDD" id="cd02440">
    <property type="entry name" value="AdoMet_MTases"/>
    <property type="match status" value="1"/>
</dbReference>
<dbReference type="FunFam" id="3.40.50.150:FF:000012">
    <property type="entry name" value="tRNA/tmRNA (uracil-C(5))-methyltransferase"/>
    <property type="match status" value="1"/>
</dbReference>
<dbReference type="Gene3D" id="2.40.50.1070">
    <property type="match status" value="1"/>
</dbReference>
<dbReference type="Gene3D" id="3.40.50.150">
    <property type="entry name" value="Vaccinia Virus protein VP39"/>
    <property type="match status" value="1"/>
</dbReference>
<dbReference type="HAMAP" id="MF_01011">
    <property type="entry name" value="RNA_methyltr_TrmA"/>
    <property type="match status" value="1"/>
</dbReference>
<dbReference type="InterPro" id="IPR030390">
    <property type="entry name" value="MeTrfase_TrmA_AS"/>
</dbReference>
<dbReference type="InterPro" id="IPR029063">
    <property type="entry name" value="SAM-dependent_MTases_sf"/>
</dbReference>
<dbReference type="InterPro" id="IPR011869">
    <property type="entry name" value="TrmA_MeTrfase"/>
</dbReference>
<dbReference type="InterPro" id="IPR010280">
    <property type="entry name" value="U5_MeTrfase_fam"/>
</dbReference>
<dbReference type="NCBIfam" id="TIGR02143">
    <property type="entry name" value="trmA_only"/>
    <property type="match status" value="1"/>
</dbReference>
<dbReference type="PANTHER" id="PTHR47790">
    <property type="entry name" value="TRNA/TMRNA (URACIL-C(5))-METHYLTRANSFERASE"/>
    <property type="match status" value="1"/>
</dbReference>
<dbReference type="PANTHER" id="PTHR47790:SF2">
    <property type="entry name" value="TRNA_TMRNA (URACIL-C(5))-METHYLTRANSFERASE"/>
    <property type="match status" value="1"/>
</dbReference>
<dbReference type="Pfam" id="PF05958">
    <property type="entry name" value="tRNA_U5-meth_tr"/>
    <property type="match status" value="1"/>
</dbReference>
<dbReference type="SUPFAM" id="SSF53335">
    <property type="entry name" value="S-adenosyl-L-methionine-dependent methyltransferases"/>
    <property type="match status" value="1"/>
</dbReference>
<dbReference type="PROSITE" id="PS51687">
    <property type="entry name" value="SAM_MT_RNA_M5U"/>
    <property type="match status" value="1"/>
</dbReference>
<dbReference type="PROSITE" id="PS01230">
    <property type="entry name" value="TRMA_1"/>
    <property type="match status" value="1"/>
</dbReference>
<evidence type="ECO:0000255" key="1">
    <source>
        <dbReference type="HAMAP-Rule" id="MF_01011"/>
    </source>
</evidence>
<reference key="1">
    <citation type="submission" date="2007-07" db="EMBL/GenBank/DDBJ databases">
        <title>Genome sequence of Campylobacter curvus 525.92 isolated from human feces.</title>
        <authorList>
            <person name="Fouts D.E."/>
            <person name="Mongodin E.F."/>
            <person name="Puiu D."/>
            <person name="Sebastian Y."/>
            <person name="Miller W.G."/>
            <person name="Mandrell R.E."/>
            <person name="Lastovica A.J."/>
            <person name="Nelson K.E."/>
        </authorList>
    </citation>
    <scope>NUCLEOTIDE SEQUENCE [LARGE SCALE GENOMIC DNA]</scope>
    <source>
        <strain>525.92</strain>
    </source>
</reference>
<gene>
    <name evidence="1" type="primary">trmA</name>
    <name type="ordered locus">Ccur92_08280</name>
    <name type="ORF">CCV52592_1420</name>
</gene>
<keyword id="KW-0489">Methyltransferase</keyword>
<keyword id="KW-1185">Reference proteome</keyword>
<keyword id="KW-0949">S-adenosyl-L-methionine</keyword>
<keyword id="KW-0808">Transferase</keyword>
<keyword id="KW-0819">tRNA processing</keyword>
<sequence>MRCVHFGECGSCTLALPYEDQLNFKANFIADKFREFFDGELEIFSSKPQRYRSRAEFGIWHENDEIYYTMHGSRSKFIKISECLKVDESIAALMPRLLEELGTSNELKSKIFGVEFISTSELCAVILLYHKRLEGLEAAFSELAKRLGVKIVARSRGQKISSDERELCDSFEINGLRYALNFGDSAFIQPNKCVNEKMISWAMNAVQNAEDMLEMYCGHGNFTIPLAGKFRRVLATEISKSSIANALKNCERNGIGNIKFLRMSAEELMSAFSGERGFRRLEGVNLADFTFSHVLVDPPRAGLEASVINFIKNYENIVYISCNPQTLYENLKELSLTHKATKFAMFDQFANTNHIECGVVLKKR</sequence>
<comment type="function">
    <text evidence="1">Dual-specificity methyltransferase that catalyzes the formation of 5-methyluridine at position 54 (m5U54) in all tRNAs, and that of position 341 (m5U341) in tmRNA (transfer-mRNA).</text>
</comment>
<comment type="catalytic activity">
    <reaction evidence="1">
        <text>uridine(54) in tRNA + S-adenosyl-L-methionine = 5-methyluridine(54) in tRNA + S-adenosyl-L-homocysteine + H(+)</text>
        <dbReference type="Rhea" id="RHEA:42712"/>
        <dbReference type="Rhea" id="RHEA-COMP:10167"/>
        <dbReference type="Rhea" id="RHEA-COMP:10193"/>
        <dbReference type="ChEBI" id="CHEBI:15378"/>
        <dbReference type="ChEBI" id="CHEBI:57856"/>
        <dbReference type="ChEBI" id="CHEBI:59789"/>
        <dbReference type="ChEBI" id="CHEBI:65315"/>
        <dbReference type="ChEBI" id="CHEBI:74447"/>
        <dbReference type="EC" id="2.1.1.35"/>
    </reaction>
</comment>
<comment type="catalytic activity">
    <reaction evidence="1">
        <text>uridine(341) in tmRNA + S-adenosyl-L-methionine = 5-methyluridine(341) in tmRNA + S-adenosyl-L-homocysteine + H(+)</text>
        <dbReference type="Rhea" id="RHEA:43612"/>
        <dbReference type="Rhea" id="RHEA-COMP:10630"/>
        <dbReference type="Rhea" id="RHEA-COMP:10631"/>
        <dbReference type="ChEBI" id="CHEBI:15378"/>
        <dbReference type="ChEBI" id="CHEBI:57856"/>
        <dbReference type="ChEBI" id="CHEBI:59789"/>
        <dbReference type="ChEBI" id="CHEBI:65315"/>
        <dbReference type="ChEBI" id="CHEBI:74447"/>
    </reaction>
</comment>
<comment type="similarity">
    <text evidence="1">Belongs to the class I-like SAM-binding methyltransferase superfamily. RNA M5U methyltransferase family. TrmA subfamily.</text>
</comment>
<accession>A7GY40</accession>
<proteinExistence type="inferred from homology"/>
<feature type="chain" id="PRO_0000388548" description="tRNA/tmRNA (uracil-C(5))-methyltransferase">
    <location>
        <begin position="1"/>
        <end position="364"/>
    </location>
</feature>
<feature type="active site" description="Nucleophile" evidence="1">
    <location>
        <position position="322"/>
    </location>
</feature>
<feature type="active site" description="Proton acceptor" evidence="1">
    <location>
        <position position="356"/>
    </location>
</feature>
<feature type="binding site" evidence="1">
    <location>
        <position position="189"/>
    </location>
    <ligand>
        <name>S-adenosyl-L-methionine</name>
        <dbReference type="ChEBI" id="CHEBI:59789"/>
    </ligand>
</feature>
<feature type="binding site" evidence="1">
    <location>
        <position position="216"/>
    </location>
    <ligand>
        <name>S-adenosyl-L-methionine</name>
        <dbReference type="ChEBI" id="CHEBI:59789"/>
    </ligand>
</feature>
<feature type="binding site" evidence="1">
    <location>
        <position position="221"/>
    </location>
    <ligand>
        <name>S-adenosyl-L-methionine</name>
        <dbReference type="ChEBI" id="CHEBI:59789"/>
    </ligand>
</feature>
<feature type="binding site" evidence="1">
    <location>
        <position position="237"/>
    </location>
    <ligand>
        <name>S-adenosyl-L-methionine</name>
        <dbReference type="ChEBI" id="CHEBI:59789"/>
    </ligand>
</feature>
<feature type="binding site" evidence="1">
    <location>
        <position position="297"/>
    </location>
    <ligand>
        <name>S-adenosyl-L-methionine</name>
        <dbReference type="ChEBI" id="CHEBI:59789"/>
    </ligand>
</feature>
<organism>
    <name type="scientific">Campylobacter curvus (strain 525.92)</name>
    <dbReference type="NCBI Taxonomy" id="360105"/>
    <lineage>
        <taxon>Bacteria</taxon>
        <taxon>Pseudomonadati</taxon>
        <taxon>Campylobacterota</taxon>
        <taxon>Epsilonproteobacteria</taxon>
        <taxon>Campylobacterales</taxon>
        <taxon>Campylobacteraceae</taxon>
        <taxon>Campylobacter</taxon>
    </lineage>
</organism>
<name>TRMA_CAMC5</name>
<protein>
    <recommendedName>
        <fullName evidence="1">tRNA/tmRNA (uracil-C(5))-methyltransferase</fullName>
        <ecNumber evidence="1">2.1.1.-</ecNumber>
        <ecNumber evidence="1">2.1.1.35</ecNumber>
    </recommendedName>
    <alternativeName>
        <fullName evidence="1">tRNA (uracil(54)-C(5))-methyltransferase</fullName>
    </alternativeName>
    <alternativeName>
        <fullName evidence="1">tRNA(m5U54)-methyltransferase</fullName>
        <shortName evidence="1">RUMT</shortName>
    </alternativeName>
    <alternativeName>
        <fullName evidence="1">tmRNA (uracil(341)-C(5))-methyltransferase</fullName>
    </alternativeName>
</protein>